<gene>
    <name evidence="1" type="primary">tgt</name>
    <name type="ordered locus">DR_2578</name>
</gene>
<keyword id="KW-0328">Glycosyltransferase</keyword>
<keyword id="KW-0479">Metal-binding</keyword>
<keyword id="KW-0671">Queuosine biosynthesis</keyword>
<keyword id="KW-1185">Reference proteome</keyword>
<keyword id="KW-0808">Transferase</keyword>
<keyword id="KW-0819">tRNA processing</keyword>
<keyword id="KW-0862">Zinc</keyword>
<comment type="function">
    <text evidence="1">Catalyzes the base-exchange of a guanine (G) residue with the queuine precursor 7-aminomethyl-7-deazaguanine (PreQ1) at position 34 (anticodon wobble position) in tRNAs with GU(N) anticodons (tRNA-Asp, -Asn, -His and -Tyr). Catalysis occurs through a double-displacement mechanism. The nucleophile active site attacks the C1' of nucleotide 34 to detach the guanine base from the RNA, forming a covalent enzyme-RNA intermediate. The proton acceptor active site deprotonates the incoming PreQ1, allowing a nucleophilic attack on the C1' of the ribose to form the product. After dissociation, two additional enzymatic reactions on the tRNA convert PreQ1 to queuine (Q), resulting in the hypermodified nucleoside queuosine (7-(((4,5-cis-dihydroxy-2-cyclopenten-1-yl)amino)methyl)-7-deazaguanosine).</text>
</comment>
<comment type="catalytic activity">
    <reaction evidence="1">
        <text>7-aminomethyl-7-carbaguanine + guanosine(34) in tRNA = 7-aminomethyl-7-carbaguanosine(34) in tRNA + guanine</text>
        <dbReference type="Rhea" id="RHEA:24104"/>
        <dbReference type="Rhea" id="RHEA-COMP:10341"/>
        <dbReference type="Rhea" id="RHEA-COMP:10342"/>
        <dbReference type="ChEBI" id="CHEBI:16235"/>
        <dbReference type="ChEBI" id="CHEBI:58703"/>
        <dbReference type="ChEBI" id="CHEBI:74269"/>
        <dbReference type="ChEBI" id="CHEBI:82833"/>
        <dbReference type="EC" id="2.4.2.29"/>
    </reaction>
</comment>
<comment type="cofactor">
    <cofactor evidence="1">
        <name>Zn(2+)</name>
        <dbReference type="ChEBI" id="CHEBI:29105"/>
    </cofactor>
    <text evidence="1">Binds 1 zinc ion per subunit.</text>
</comment>
<comment type="pathway">
    <text evidence="1">tRNA modification; tRNA-queuosine biosynthesis.</text>
</comment>
<comment type="subunit">
    <text evidence="1">Homodimer. Within each dimer, one monomer is responsible for RNA recognition and catalysis, while the other monomer binds to the replacement base PreQ1.</text>
</comment>
<comment type="similarity">
    <text evidence="1">Belongs to the queuine tRNA-ribosyltransferase family.</text>
</comment>
<proteinExistence type="inferred from homology"/>
<name>TGT_DEIRA</name>
<dbReference type="EC" id="2.4.2.29" evidence="1"/>
<dbReference type="EMBL" id="AE000513">
    <property type="protein sequence ID" value="AAF12118.1"/>
    <property type="molecule type" value="Genomic_DNA"/>
</dbReference>
<dbReference type="PIR" id="D75256">
    <property type="entry name" value="D75256"/>
</dbReference>
<dbReference type="RefSeq" id="NP_296298.1">
    <property type="nucleotide sequence ID" value="NC_001263.1"/>
</dbReference>
<dbReference type="RefSeq" id="WP_010889203.1">
    <property type="nucleotide sequence ID" value="NZ_CP150840.1"/>
</dbReference>
<dbReference type="SMR" id="Q9RRB5"/>
<dbReference type="FunCoup" id="Q9RRB5">
    <property type="interactions" value="455"/>
</dbReference>
<dbReference type="STRING" id="243230.DR_2578"/>
<dbReference type="PaxDb" id="243230-DR_2578"/>
<dbReference type="EnsemblBacteria" id="AAF12118">
    <property type="protein sequence ID" value="AAF12118"/>
    <property type="gene ID" value="DR_2578"/>
</dbReference>
<dbReference type="KEGG" id="dra:DR_2578"/>
<dbReference type="PATRIC" id="fig|243230.17.peg.2824"/>
<dbReference type="eggNOG" id="COG0343">
    <property type="taxonomic scope" value="Bacteria"/>
</dbReference>
<dbReference type="HOGENOM" id="CLU_022060_0_1_0"/>
<dbReference type="InParanoid" id="Q9RRB5"/>
<dbReference type="OrthoDB" id="9805417at2"/>
<dbReference type="UniPathway" id="UPA00392"/>
<dbReference type="Proteomes" id="UP000002524">
    <property type="component" value="Chromosome 1"/>
</dbReference>
<dbReference type="GO" id="GO:0005737">
    <property type="term" value="C:cytoplasm"/>
    <property type="evidence" value="ECO:0000318"/>
    <property type="project" value="GO_Central"/>
</dbReference>
<dbReference type="GO" id="GO:0005829">
    <property type="term" value="C:cytosol"/>
    <property type="evidence" value="ECO:0000318"/>
    <property type="project" value="GO_Central"/>
</dbReference>
<dbReference type="GO" id="GO:0046872">
    <property type="term" value="F:metal ion binding"/>
    <property type="evidence" value="ECO:0007669"/>
    <property type="project" value="UniProtKB-KW"/>
</dbReference>
<dbReference type="GO" id="GO:0008479">
    <property type="term" value="F:tRNA-guanosine(34) queuine transglycosylase activity"/>
    <property type="evidence" value="ECO:0007669"/>
    <property type="project" value="UniProtKB-UniRule"/>
</dbReference>
<dbReference type="GO" id="GO:0008616">
    <property type="term" value="P:queuosine biosynthetic process"/>
    <property type="evidence" value="ECO:0000318"/>
    <property type="project" value="GO_Central"/>
</dbReference>
<dbReference type="GO" id="GO:0002099">
    <property type="term" value="P:tRNA wobble guanine modification"/>
    <property type="evidence" value="ECO:0000318"/>
    <property type="project" value="GO_Central"/>
</dbReference>
<dbReference type="GO" id="GO:0101030">
    <property type="term" value="P:tRNA-guanine transglycosylation"/>
    <property type="evidence" value="ECO:0007669"/>
    <property type="project" value="InterPro"/>
</dbReference>
<dbReference type="FunFam" id="3.20.20.105:FF:000001">
    <property type="entry name" value="Queuine tRNA-ribosyltransferase"/>
    <property type="match status" value="1"/>
</dbReference>
<dbReference type="Gene3D" id="3.20.20.105">
    <property type="entry name" value="Queuine tRNA-ribosyltransferase-like"/>
    <property type="match status" value="1"/>
</dbReference>
<dbReference type="HAMAP" id="MF_00168">
    <property type="entry name" value="Q_tRNA_Tgt"/>
    <property type="match status" value="1"/>
</dbReference>
<dbReference type="InterPro" id="IPR050076">
    <property type="entry name" value="ArchSynthase1/Queuine_TRR"/>
</dbReference>
<dbReference type="InterPro" id="IPR004803">
    <property type="entry name" value="TGT"/>
</dbReference>
<dbReference type="InterPro" id="IPR036511">
    <property type="entry name" value="TGT-like_sf"/>
</dbReference>
<dbReference type="InterPro" id="IPR002616">
    <property type="entry name" value="tRNA_ribo_trans-like"/>
</dbReference>
<dbReference type="NCBIfam" id="TIGR00430">
    <property type="entry name" value="Q_tRNA_tgt"/>
    <property type="match status" value="1"/>
</dbReference>
<dbReference type="NCBIfam" id="TIGR00449">
    <property type="entry name" value="tgt_general"/>
    <property type="match status" value="1"/>
</dbReference>
<dbReference type="PANTHER" id="PTHR46499">
    <property type="entry name" value="QUEUINE TRNA-RIBOSYLTRANSFERASE"/>
    <property type="match status" value="1"/>
</dbReference>
<dbReference type="PANTHER" id="PTHR46499:SF1">
    <property type="entry name" value="QUEUINE TRNA-RIBOSYLTRANSFERASE"/>
    <property type="match status" value="1"/>
</dbReference>
<dbReference type="Pfam" id="PF01702">
    <property type="entry name" value="TGT"/>
    <property type="match status" value="1"/>
</dbReference>
<dbReference type="SUPFAM" id="SSF51713">
    <property type="entry name" value="tRNA-guanine transglycosylase"/>
    <property type="match status" value="1"/>
</dbReference>
<protein>
    <recommendedName>
        <fullName evidence="1">Queuine tRNA-ribosyltransferase</fullName>
        <ecNumber evidence="1">2.4.2.29</ecNumber>
    </recommendedName>
    <alternativeName>
        <fullName evidence="1">Guanine insertion enzyme</fullName>
    </alternativeName>
    <alternativeName>
        <fullName evidence="1">tRNA-guanine transglycosylase</fullName>
    </alternativeName>
</protein>
<feature type="chain" id="PRO_0000135470" description="Queuine tRNA-ribosyltransferase">
    <location>
        <begin position="1"/>
        <end position="394"/>
    </location>
</feature>
<feature type="region of interest" description="RNA binding" evidence="1">
    <location>
        <begin position="253"/>
        <end position="259"/>
    </location>
</feature>
<feature type="region of interest" description="RNA binding; important for wobble base 34 recognition" evidence="1">
    <location>
        <begin position="277"/>
        <end position="281"/>
    </location>
</feature>
<feature type="active site" description="Proton acceptor" evidence="1">
    <location>
        <position position="99"/>
    </location>
</feature>
<feature type="active site" description="Nucleophile" evidence="1">
    <location>
        <position position="272"/>
    </location>
</feature>
<feature type="binding site" evidence="1">
    <location>
        <begin position="99"/>
        <end position="103"/>
    </location>
    <ligand>
        <name>substrate</name>
    </ligand>
</feature>
<feature type="binding site" evidence="1">
    <location>
        <position position="153"/>
    </location>
    <ligand>
        <name>substrate</name>
    </ligand>
</feature>
<feature type="binding site" evidence="1">
    <location>
        <position position="195"/>
    </location>
    <ligand>
        <name>substrate</name>
    </ligand>
</feature>
<feature type="binding site" evidence="1">
    <location>
        <position position="222"/>
    </location>
    <ligand>
        <name>substrate</name>
    </ligand>
</feature>
<feature type="binding site" evidence="1">
    <location>
        <position position="310"/>
    </location>
    <ligand>
        <name>Zn(2+)</name>
        <dbReference type="ChEBI" id="CHEBI:29105"/>
    </ligand>
</feature>
<feature type="binding site" evidence="1">
    <location>
        <position position="312"/>
    </location>
    <ligand>
        <name>Zn(2+)</name>
        <dbReference type="ChEBI" id="CHEBI:29105"/>
    </ligand>
</feature>
<feature type="binding site" evidence="1">
    <location>
        <position position="315"/>
    </location>
    <ligand>
        <name>Zn(2+)</name>
        <dbReference type="ChEBI" id="CHEBI:29105"/>
    </ligand>
</feature>
<feature type="binding site" evidence="1">
    <location>
        <position position="341"/>
    </location>
    <ligand>
        <name>Zn(2+)</name>
        <dbReference type="ChEBI" id="CHEBI:29105"/>
    </ligand>
</feature>
<organism>
    <name type="scientific">Deinococcus radiodurans (strain ATCC 13939 / DSM 20539 / JCM 16871 / CCUG 27074 / LMG 4051 / NBRC 15346 / NCIMB 9279 / VKM B-1422 / R1)</name>
    <dbReference type="NCBI Taxonomy" id="243230"/>
    <lineage>
        <taxon>Bacteria</taxon>
        <taxon>Thermotogati</taxon>
        <taxon>Deinococcota</taxon>
        <taxon>Deinococci</taxon>
        <taxon>Deinococcales</taxon>
        <taxon>Deinococcaceae</taxon>
        <taxon>Deinococcus</taxon>
    </lineage>
</organism>
<evidence type="ECO:0000255" key="1">
    <source>
        <dbReference type="HAMAP-Rule" id="MF_00168"/>
    </source>
</evidence>
<accession>Q9RRB5</accession>
<sequence>MNQCGTITAVFEFEIKQRDGRARTATFQTPRGAVTTPMFMPVGTQGTVKGISPQELLEIGSQMILANTYHLMLRPGEQLVKAHGGLPGFTAYPGPFLTDSGGFQVMSLGHMRKISEEGVVFKNHLDGSRVELTPERSIQVQEALGADVIMAFDECPPYPAERPYIEASLDRTVRWLERCHAVKTKDDQALFAIVQGGVHEDLRLKSLEATLPFATPGFAVGGLAVGESKEEMYPAVAFTAGRLPENKPRYLMGVGHPEDLVAGVALGIDMFDCVYPTRTGRFGYALTDDGRLNLNSSAPRTQLQPIDAECDCYACRHYTRAYLAHLLRAEEMLAPRMLSLHNLRYLHRLVERMRVAINGQQFHPWAADWSERYFHGNVPGWFTSAFERSTQSEI</sequence>
<reference key="1">
    <citation type="journal article" date="1999" name="Science">
        <title>Genome sequence of the radioresistant bacterium Deinococcus radiodurans R1.</title>
        <authorList>
            <person name="White O."/>
            <person name="Eisen J.A."/>
            <person name="Heidelberg J.F."/>
            <person name="Hickey E.K."/>
            <person name="Peterson J.D."/>
            <person name="Dodson R.J."/>
            <person name="Haft D.H."/>
            <person name="Gwinn M.L."/>
            <person name="Nelson W.C."/>
            <person name="Richardson D.L."/>
            <person name="Moffat K.S."/>
            <person name="Qin H."/>
            <person name="Jiang L."/>
            <person name="Pamphile W."/>
            <person name="Crosby M."/>
            <person name="Shen M."/>
            <person name="Vamathevan J.J."/>
            <person name="Lam P."/>
            <person name="McDonald L.A."/>
            <person name="Utterback T.R."/>
            <person name="Zalewski C."/>
            <person name="Makarova K.S."/>
            <person name="Aravind L."/>
            <person name="Daly M.J."/>
            <person name="Minton K.W."/>
            <person name="Fleischmann R.D."/>
            <person name="Ketchum K.A."/>
            <person name="Nelson K.E."/>
            <person name="Salzberg S.L."/>
            <person name="Smith H.O."/>
            <person name="Venter J.C."/>
            <person name="Fraser C.M."/>
        </authorList>
    </citation>
    <scope>NUCLEOTIDE SEQUENCE [LARGE SCALE GENOMIC DNA]</scope>
    <source>
        <strain>ATCC 13939 / DSM 20539 / JCM 16871 / CCUG 27074 / LMG 4051 / NBRC 15346 / NCIMB 9279 / VKM B-1422 / R1</strain>
    </source>
</reference>